<comment type="function">
    <text evidence="1">Cell wall formation.</text>
</comment>
<comment type="catalytic activity">
    <reaction evidence="1">
        <text>UDP-N-acetyl-alpha-D-muramate + NADP(+) = UDP-N-acetyl-3-O-(1-carboxyvinyl)-alpha-D-glucosamine + NADPH + H(+)</text>
        <dbReference type="Rhea" id="RHEA:12248"/>
        <dbReference type="ChEBI" id="CHEBI:15378"/>
        <dbReference type="ChEBI" id="CHEBI:57783"/>
        <dbReference type="ChEBI" id="CHEBI:58349"/>
        <dbReference type="ChEBI" id="CHEBI:68483"/>
        <dbReference type="ChEBI" id="CHEBI:70757"/>
        <dbReference type="EC" id="1.3.1.98"/>
    </reaction>
</comment>
<comment type="cofactor">
    <cofactor evidence="1">
        <name>FAD</name>
        <dbReference type="ChEBI" id="CHEBI:57692"/>
    </cofactor>
</comment>
<comment type="pathway">
    <text evidence="1">Cell wall biogenesis; peptidoglycan biosynthesis.</text>
</comment>
<comment type="subcellular location">
    <subcellularLocation>
        <location evidence="1">Cytoplasm</location>
    </subcellularLocation>
</comment>
<comment type="similarity">
    <text evidence="1">Belongs to the MurB family.</text>
</comment>
<keyword id="KW-0131">Cell cycle</keyword>
<keyword id="KW-0132">Cell division</keyword>
<keyword id="KW-0133">Cell shape</keyword>
<keyword id="KW-0961">Cell wall biogenesis/degradation</keyword>
<keyword id="KW-0963">Cytoplasm</keyword>
<keyword id="KW-0274">FAD</keyword>
<keyword id="KW-0285">Flavoprotein</keyword>
<keyword id="KW-0521">NADP</keyword>
<keyword id="KW-0560">Oxidoreductase</keyword>
<keyword id="KW-0573">Peptidoglycan synthesis</keyword>
<gene>
    <name evidence="1" type="primary">murB</name>
    <name type="ordered locus">LGAS_1293</name>
</gene>
<sequence>MKMQLMDLKKQGIDIQENIPLSRFTFTKTGGPAQYLAFPKNLDELKILVETVKTNNLPLTVIGNASNLIIRDGGISGLVLILTKMDKIVANQEEATVTADAGARIIDTSEAACEASLSGLEFAAGIPGSVGGAVFMNAGAYGGETEFVIKSVRVLTREGKFKTYTHDEMEFGYRHSLVQETGDIVISATFGLEPGDKWAIKAKMEYFNGLRRAKQPLEYPSCGSVFKRPTGHFVGPMIIKAGLQGKRIGGAEDSKKHAGFIVNVGGATATDYLDLIHLIQKTIKKDFDVDLQTEVRIIGKEKD</sequence>
<proteinExistence type="inferred from homology"/>
<organism>
    <name type="scientific">Lactobacillus gasseri (strain ATCC 33323 / DSM 20243 / BCRC 14619 / CIP 102991 / JCM 1131 / KCTC 3163 / NCIMB 11718 / NCTC 13722 / AM63)</name>
    <dbReference type="NCBI Taxonomy" id="324831"/>
    <lineage>
        <taxon>Bacteria</taxon>
        <taxon>Bacillati</taxon>
        <taxon>Bacillota</taxon>
        <taxon>Bacilli</taxon>
        <taxon>Lactobacillales</taxon>
        <taxon>Lactobacillaceae</taxon>
        <taxon>Lactobacillus</taxon>
    </lineage>
</organism>
<reference key="1">
    <citation type="journal article" date="2006" name="Proc. Natl. Acad. Sci. U.S.A.">
        <title>Comparative genomics of the lactic acid bacteria.</title>
        <authorList>
            <person name="Makarova K.S."/>
            <person name="Slesarev A."/>
            <person name="Wolf Y.I."/>
            <person name="Sorokin A."/>
            <person name="Mirkin B."/>
            <person name="Koonin E.V."/>
            <person name="Pavlov A."/>
            <person name="Pavlova N."/>
            <person name="Karamychev V."/>
            <person name="Polouchine N."/>
            <person name="Shakhova V."/>
            <person name="Grigoriev I."/>
            <person name="Lou Y."/>
            <person name="Rohksar D."/>
            <person name="Lucas S."/>
            <person name="Huang K."/>
            <person name="Goodstein D.M."/>
            <person name="Hawkins T."/>
            <person name="Plengvidhya V."/>
            <person name="Welker D."/>
            <person name="Hughes J."/>
            <person name="Goh Y."/>
            <person name="Benson A."/>
            <person name="Baldwin K."/>
            <person name="Lee J.-H."/>
            <person name="Diaz-Muniz I."/>
            <person name="Dosti B."/>
            <person name="Smeianov V."/>
            <person name="Wechter W."/>
            <person name="Barabote R."/>
            <person name="Lorca G."/>
            <person name="Altermann E."/>
            <person name="Barrangou R."/>
            <person name="Ganesan B."/>
            <person name="Xie Y."/>
            <person name="Rawsthorne H."/>
            <person name="Tamir D."/>
            <person name="Parker C."/>
            <person name="Breidt F."/>
            <person name="Broadbent J.R."/>
            <person name="Hutkins R."/>
            <person name="O'Sullivan D."/>
            <person name="Steele J."/>
            <person name="Unlu G."/>
            <person name="Saier M.H. Jr."/>
            <person name="Klaenhammer T."/>
            <person name="Richardson P."/>
            <person name="Kozyavkin S."/>
            <person name="Weimer B.C."/>
            <person name="Mills D.A."/>
        </authorList>
    </citation>
    <scope>NUCLEOTIDE SEQUENCE [LARGE SCALE GENOMIC DNA]</scope>
    <source>
        <strain>ATCC 33323 / DSM 20243 / BCRC 14619 / CIP 102991 / JCM 1131 / KCTC 3163 / NCIMB 11718 / NCTC 13722 / AM63</strain>
    </source>
</reference>
<feature type="chain" id="PRO_1000071039" description="UDP-N-acetylenolpyruvoylglucosamine reductase">
    <location>
        <begin position="1"/>
        <end position="303"/>
    </location>
</feature>
<feature type="domain" description="FAD-binding PCMH-type" evidence="1">
    <location>
        <begin position="28"/>
        <end position="195"/>
    </location>
</feature>
<feature type="active site" evidence="1">
    <location>
        <position position="174"/>
    </location>
</feature>
<feature type="active site" description="Proton donor" evidence="1">
    <location>
        <position position="224"/>
    </location>
</feature>
<feature type="active site" evidence="1">
    <location>
        <position position="294"/>
    </location>
</feature>
<accession>Q042G6</accession>
<protein>
    <recommendedName>
        <fullName evidence="1">UDP-N-acetylenolpyruvoylglucosamine reductase</fullName>
        <ecNumber evidence="1">1.3.1.98</ecNumber>
    </recommendedName>
    <alternativeName>
        <fullName evidence="1">UDP-N-acetylmuramate dehydrogenase</fullName>
    </alternativeName>
</protein>
<name>MURB_LACGA</name>
<dbReference type="EC" id="1.3.1.98" evidence="1"/>
<dbReference type="EMBL" id="CP000413">
    <property type="protein sequence ID" value="ABJ60656.1"/>
    <property type="molecule type" value="Genomic_DNA"/>
</dbReference>
<dbReference type="SMR" id="Q042G6"/>
<dbReference type="KEGG" id="lga:LGAS_1293"/>
<dbReference type="HOGENOM" id="CLU_035304_1_1_9"/>
<dbReference type="UniPathway" id="UPA00219"/>
<dbReference type="Proteomes" id="UP000000664">
    <property type="component" value="Chromosome"/>
</dbReference>
<dbReference type="GO" id="GO:0005829">
    <property type="term" value="C:cytosol"/>
    <property type="evidence" value="ECO:0007669"/>
    <property type="project" value="TreeGrafter"/>
</dbReference>
<dbReference type="GO" id="GO:0071949">
    <property type="term" value="F:FAD binding"/>
    <property type="evidence" value="ECO:0007669"/>
    <property type="project" value="InterPro"/>
</dbReference>
<dbReference type="GO" id="GO:0008762">
    <property type="term" value="F:UDP-N-acetylmuramate dehydrogenase activity"/>
    <property type="evidence" value="ECO:0007669"/>
    <property type="project" value="UniProtKB-UniRule"/>
</dbReference>
<dbReference type="GO" id="GO:0051301">
    <property type="term" value="P:cell division"/>
    <property type="evidence" value="ECO:0007669"/>
    <property type="project" value="UniProtKB-KW"/>
</dbReference>
<dbReference type="GO" id="GO:0071555">
    <property type="term" value="P:cell wall organization"/>
    <property type="evidence" value="ECO:0007669"/>
    <property type="project" value="UniProtKB-KW"/>
</dbReference>
<dbReference type="GO" id="GO:0009252">
    <property type="term" value="P:peptidoglycan biosynthetic process"/>
    <property type="evidence" value="ECO:0007669"/>
    <property type="project" value="UniProtKB-UniRule"/>
</dbReference>
<dbReference type="GO" id="GO:0008360">
    <property type="term" value="P:regulation of cell shape"/>
    <property type="evidence" value="ECO:0007669"/>
    <property type="project" value="UniProtKB-KW"/>
</dbReference>
<dbReference type="Gene3D" id="3.30.465.10">
    <property type="match status" value="1"/>
</dbReference>
<dbReference type="Gene3D" id="3.90.78.10">
    <property type="entry name" value="UDP-N-acetylenolpyruvoylglucosamine reductase, C-terminal domain"/>
    <property type="match status" value="1"/>
</dbReference>
<dbReference type="Gene3D" id="3.30.43.10">
    <property type="entry name" value="Uridine Diphospho-n-acetylenolpyruvylglucosamine Reductase, domain 2"/>
    <property type="match status" value="1"/>
</dbReference>
<dbReference type="HAMAP" id="MF_00037">
    <property type="entry name" value="MurB"/>
    <property type="match status" value="1"/>
</dbReference>
<dbReference type="InterPro" id="IPR016166">
    <property type="entry name" value="FAD-bd_PCMH"/>
</dbReference>
<dbReference type="InterPro" id="IPR036318">
    <property type="entry name" value="FAD-bd_PCMH-like_sf"/>
</dbReference>
<dbReference type="InterPro" id="IPR016167">
    <property type="entry name" value="FAD-bd_PCMH_sub1"/>
</dbReference>
<dbReference type="InterPro" id="IPR016169">
    <property type="entry name" value="FAD-bd_PCMH_sub2"/>
</dbReference>
<dbReference type="InterPro" id="IPR003170">
    <property type="entry name" value="MurB"/>
</dbReference>
<dbReference type="InterPro" id="IPR011601">
    <property type="entry name" value="MurB_C"/>
</dbReference>
<dbReference type="InterPro" id="IPR036635">
    <property type="entry name" value="MurB_C_sf"/>
</dbReference>
<dbReference type="InterPro" id="IPR006094">
    <property type="entry name" value="Oxid_FAD_bind_N"/>
</dbReference>
<dbReference type="NCBIfam" id="TIGR00179">
    <property type="entry name" value="murB"/>
    <property type="match status" value="1"/>
</dbReference>
<dbReference type="NCBIfam" id="NF010480">
    <property type="entry name" value="PRK13905.1"/>
    <property type="match status" value="1"/>
</dbReference>
<dbReference type="PANTHER" id="PTHR21071">
    <property type="entry name" value="UDP-N-ACETYLENOLPYRUVOYLGLUCOSAMINE REDUCTASE"/>
    <property type="match status" value="1"/>
</dbReference>
<dbReference type="PANTHER" id="PTHR21071:SF4">
    <property type="entry name" value="UDP-N-ACETYLENOLPYRUVOYLGLUCOSAMINE REDUCTASE"/>
    <property type="match status" value="1"/>
</dbReference>
<dbReference type="Pfam" id="PF01565">
    <property type="entry name" value="FAD_binding_4"/>
    <property type="match status" value="1"/>
</dbReference>
<dbReference type="Pfam" id="PF02873">
    <property type="entry name" value="MurB_C"/>
    <property type="match status" value="1"/>
</dbReference>
<dbReference type="SUPFAM" id="SSF56176">
    <property type="entry name" value="FAD-binding/transporter-associated domain-like"/>
    <property type="match status" value="1"/>
</dbReference>
<dbReference type="SUPFAM" id="SSF56194">
    <property type="entry name" value="Uridine diphospho-N-Acetylenolpyruvylglucosamine reductase, MurB, C-terminal domain"/>
    <property type="match status" value="1"/>
</dbReference>
<dbReference type="PROSITE" id="PS51387">
    <property type="entry name" value="FAD_PCMH"/>
    <property type="match status" value="1"/>
</dbReference>
<evidence type="ECO:0000255" key="1">
    <source>
        <dbReference type="HAMAP-Rule" id="MF_00037"/>
    </source>
</evidence>